<proteinExistence type="inferred from homology"/>
<organism>
    <name type="scientific">Escherichia coli O1:K1 / APEC</name>
    <dbReference type="NCBI Taxonomy" id="405955"/>
    <lineage>
        <taxon>Bacteria</taxon>
        <taxon>Pseudomonadati</taxon>
        <taxon>Pseudomonadota</taxon>
        <taxon>Gammaproteobacteria</taxon>
        <taxon>Enterobacterales</taxon>
        <taxon>Enterobacteriaceae</taxon>
        <taxon>Escherichia</taxon>
    </lineage>
</organism>
<keyword id="KW-0007">Acetylation</keyword>
<keyword id="KW-1185">Reference proteome</keyword>
<keyword id="KW-0687">Ribonucleoprotein</keyword>
<keyword id="KW-0689">Ribosomal protein</keyword>
<keyword id="KW-0694">RNA-binding</keyword>
<keyword id="KW-0699">rRNA-binding</keyword>
<evidence type="ECO:0000255" key="1">
    <source>
        <dbReference type="HAMAP-Rule" id="MF_01365"/>
    </source>
</evidence>
<evidence type="ECO:0000305" key="2"/>
<protein>
    <recommendedName>
        <fullName evidence="1">Large ribosomal subunit protein uL6</fullName>
    </recommendedName>
    <alternativeName>
        <fullName evidence="2">50S ribosomal protein L6</fullName>
    </alternativeName>
</protein>
<accession>A1AGJ4</accession>
<name>RL6_ECOK1</name>
<dbReference type="EMBL" id="CP000468">
    <property type="protein sequence ID" value="ABJ02784.1"/>
    <property type="molecule type" value="Genomic_DNA"/>
</dbReference>
<dbReference type="RefSeq" id="WP_000091945.1">
    <property type="nucleotide sequence ID" value="NZ_CADILS010000044.1"/>
</dbReference>
<dbReference type="SMR" id="A1AGJ4"/>
<dbReference type="GeneID" id="86948169"/>
<dbReference type="KEGG" id="ecv:APECO1_3144"/>
<dbReference type="HOGENOM" id="CLU_065464_1_2_6"/>
<dbReference type="Proteomes" id="UP000008216">
    <property type="component" value="Chromosome"/>
</dbReference>
<dbReference type="GO" id="GO:0022625">
    <property type="term" value="C:cytosolic large ribosomal subunit"/>
    <property type="evidence" value="ECO:0007669"/>
    <property type="project" value="TreeGrafter"/>
</dbReference>
<dbReference type="GO" id="GO:0019843">
    <property type="term" value="F:rRNA binding"/>
    <property type="evidence" value="ECO:0007669"/>
    <property type="project" value="UniProtKB-UniRule"/>
</dbReference>
<dbReference type="GO" id="GO:0003735">
    <property type="term" value="F:structural constituent of ribosome"/>
    <property type="evidence" value="ECO:0007669"/>
    <property type="project" value="InterPro"/>
</dbReference>
<dbReference type="GO" id="GO:0002181">
    <property type="term" value="P:cytoplasmic translation"/>
    <property type="evidence" value="ECO:0007669"/>
    <property type="project" value="TreeGrafter"/>
</dbReference>
<dbReference type="FunFam" id="3.90.930.12:FF:000001">
    <property type="entry name" value="50S ribosomal protein L6"/>
    <property type="match status" value="1"/>
</dbReference>
<dbReference type="FunFam" id="3.90.930.12:FF:000002">
    <property type="entry name" value="50S ribosomal protein L6"/>
    <property type="match status" value="1"/>
</dbReference>
<dbReference type="Gene3D" id="3.90.930.12">
    <property type="entry name" value="Ribosomal protein L6, alpha-beta domain"/>
    <property type="match status" value="2"/>
</dbReference>
<dbReference type="HAMAP" id="MF_01365_B">
    <property type="entry name" value="Ribosomal_uL6_B"/>
    <property type="match status" value="1"/>
</dbReference>
<dbReference type="InterPro" id="IPR000702">
    <property type="entry name" value="Ribosomal_uL6-like"/>
</dbReference>
<dbReference type="InterPro" id="IPR036789">
    <property type="entry name" value="Ribosomal_uL6-like_a/b-dom_sf"/>
</dbReference>
<dbReference type="InterPro" id="IPR020040">
    <property type="entry name" value="Ribosomal_uL6_a/b-dom"/>
</dbReference>
<dbReference type="InterPro" id="IPR019906">
    <property type="entry name" value="Ribosomal_uL6_bac-type"/>
</dbReference>
<dbReference type="InterPro" id="IPR002358">
    <property type="entry name" value="Ribosomal_uL6_CS"/>
</dbReference>
<dbReference type="NCBIfam" id="TIGR03654">
    <property type="entry name" value="L6_bact"/>
    <property type="match status" value="1"/>
</dbReference>
<dbReference type="PANTHER" id="PTHR11655">
    <property type="entry name" value="60S/50S RIBOSOMAL PROTEIN L6/L9"/>
    <property type="match status" value="1"/>
</dbReference>
<dbReference type="PANTHER" id="PTHR11655:SF14">
    <property type="entry name" value="LARGE RIBOSOMAL SUBUNIT PROTEIN UL6M"/>
    <property type="match status" value="1"/>
</dbReference>
<dbReference type="Pfam" id="PF00347">
    <property type="entry name" value="Ribosomal_L6"/>
    <property type="match status" value="2"/>
</dbReference>
<dbReference type="PIRSF" id="PIRSF002162">
    <property type="entry name" value="Ribosomal_L6"/>
    <property type="match status" value="1"/>
</dbReference>
<dbReference type="PRINTS" id="PR00059">
    <property type="entry name" value="RIBOSOMALL6"/>
</dbReference>
<dbReference type="SUPFAM" id="SSF56053">
    <property type="entry name" value="Ribosomal protein L6"/>
    <property type="match status" value="2"/>
</dbReference>
<dbReference type="PROSITE" id="PS00525">
    <property type="entry name" value="RIBOSOMAL_L6_1"/>
    <property type="match status" value="1"/>
</dbReference>
<comment type="function">
    <text evidence="1">This protein binds to the 23S rRNA, and is important in its secondary structure. It is located near the subunit interface in the base of the L7/L12 stalk, and near the tRNA binding site of the peptidyltransferase center.</text>
</comment>
<comment type="subunit">
    <text evidence="1">Part of the 50S ribosomal subunit.</text>
</comment>
<comment type="similarity">
    <text evidence="1">Belongs to the universal ribosomal protein uL6 family.</text>
</comment>
<reference key="1">
    <citation type="journal article" date="2007" name="J. Bacteriol.">
        <title>The genome sequence of avian pathogenic Escherichia coli strain O1:K1:H7 shares strong similarities with human extraintestinal pathogenic E. coli genomes.</title>
        <authorList>
            <person name="Johnson T.J."/>
            <person name="Kariyawasam S."/>
            <person name="Wannemuehler Y."/>
            <person name="Mangiamele P."/>
            <person name="Johnson S.J."/>
            <person name="Doetkott C."/>
            <person name="Skyberg J.A."/>
            <person name="Lynne A.M."/>
            <person name="Johnson J.R."/>
            <person name="Nolan L.K."/>
        </authorList>
    </citation>
    <scope>NUCLEOTIDE SEQUENCE [LARGE SCALE GENOMIC DNA]</scope>
</reference>
<gene>
    <name evidence="1" type="primary">rplF</name>
    <name type="ordered locus">Ecok1_32900</name>
    <name type="ORF">APECO1_3144</name>
</gene>
<feature type="chain" id="PRO_1000055227" description="Large ribosomal subunit protein uL6">
    <location>
        <begin position="1"/>
        <end position="177"/>
    </location>
</feature>
<feature type="modified residue" description="N6-acetyllysine" evidence="1">
    <location>
        <position position="44"/>
    </location>
</feature>
<sequence>MSRVAKAPVVVPAGVDVKINGQVITIKGKNGELTRTLNDAVEVKHADNTLTFGPRDGYADGWAQAGTARALLNSMVIGVTEGFTKKLQLVGVGYRAAVKGNVINLSLGFSHPVDHQLPAGITAECPTQTEIVLKGADKQVIGQVAADLRAYRRPEPYKGKGVRYADEVVRTKEAKKK</sequence>